<reference key="1">
    <citation type="submission" date="1998-03" db="EMBL/GenBank/DDBJ databases">
        <authorList>
            <person name="Wen Y."/>
            <person name="O'Rand M.G."/>
        </authorList>
    </citation>
    <scope>NUCLEOTIDE SEQUENCE [MRNA]</scope>
    <source>
        <tissue>Testis</tissue>
    </source>
</reference>
<sequence length="179" mass="20864">MSIPFSNTHYRIPQGFGNLLEGLTREILREQPDNIPAFAAAYFENLLEKREKTNFDPAEWGAKVDDRFYNNHAFKDEPPEKSETQKIQPEKVAIEKETMPQETVKEKETQVSFVEEPTEEPQKEEEEEEDEEDLEGLLVREGMQDAAVKIQAVFRGHKTRKEYLKKRDSTDETADENNE</sequence>
<proteinExistence type="evidence at transcript level"/>
<protein>
    <recommendedName>
        <fullName>Sperm surface protein Sp17</fullName>
    </recommendedName>
    <alternativeName>
        <fullName>Sperm autoantigenic protein 17</fullName>
    </alternativeName>
</protein>
<comment type="function">
    <text evidence="1">Sperm surface zona pellucida binding protein. Helps to bind spermatozoa to the zona pellucida with high affinity. Might function in binding zona pellucida and carbohydrates (By similarity).</text>
</comment>
<comment type="subunit">
    <text evidence="1">Homodimer. May interact with ROPN1 (By similarity).</text>
</comment>
<comment type="subcellular location">
    <subcellularLocation>
        <location evidence="4">Membrane</location>
        <topology evidence="4">Peripheral membrane protein</topology>
    </subcellularLocation>
</comment>
<comment type="tissue specificity">
    <text>Testis- and sperm-specific.</text>
</comment>
<organism>
    <name type="scientific">Monodelphis domestica</name>
    <name type="common">Gray short-tailed opossum</name>
    <dbReference type="NCBI Taxonomy" id="13616"/>
    <lineage>
        <taxon>Eukaryota</taxon>
        <taxon>Metazoa</taxon>
        <taxon>Chordata</taxon>
        <taxon>Craniata</taxon>
        <taxon>Vertebrata</taxon>
        <taxon>Euteleostomi</taxon>
        <taxon>Mammalia</taxon>
        <taxon>Metatheria</taxon>
        <taxon>Didelphimorphia</taxon>
        <taxon>Didelphidae</taxon>
        <taxon>Monodelphis</taxon>
    </lineage>
</organism>
<evidence type="ECO:0000250" key="1"/>
<evidence type="ECO:0000255" key="2">
    <source>
        <dbReference type="PROSITE-ProRule" id="PRU00116"/>
    </source>
</evidence>
<evidence type="ECO:0000256" key="3">
    <source>
        <dbReference type="SAM" id="MobiDB-lite"/>
    </source>
</evidence>
<evidence type="ECO:0000305" key="4"/>
<accession>O62771</accession>
<dbReference type="EMBL" id="AF054290">
    <property type="protein sequence ID" value="AAC08025.1"/>
    <property type="molecule type" value="mRNA"/>
</dbReference>
<dbReference type="RefSeq" id="NP_001028164.1">
    <property type="nucleotide sequence ID" value="NM_001032992.1"/>
</dbReference>
<dbReference type="SMR" id="O62771"/>
<dbReference type="STRING" id="13616.ENSMODP00000004559"/>
<dbReference type="GeneID" id="554229"/>
<dbReference type="KEGG" id="mdo:554229"/>
<dbReference type="CTD" id="53340"/>
<dbReference type="eggNOG" id="ENOG502S4R6">
    <property type="taxonomic scope" value="Eukaryota"/>
</dbReference>
<dbReference type="HOGENOM" id="CLU_115900_0_0_1"/>
<dbReference type="InParanoid" id="O62771"/>
<dbReference type="OrthoDB" id="252964at2759"/>
<dbReference type="Proteomes" id="UP000002280">
    <property type="component" value="Unplaced"/>
</dbReference>
<dbReference type="GO" id="GO:0005737">
    <property type="term" value="C:cytoplasm"/>
    <property type="evidence" value="ECO:0000318"/>
    <property type="project" value="GO_Central"/>
</dbReference>
<dbReference type="GO" id="GO:0016020">
    <property type="term" value="C:membrane"/>
    <property type="evidence" value="ECO:0007669"/>
    <property type="project" value="UniProtKB-SubCell"/>
</dbReference>
<dbReference type="GO" id="GO:0035686">
    <property type="term" value="C:sperm fibrous sheath"/>
    <property type="evidence" value="ECO:0000318"/>
    <property type="project" value="GO_Central"/>
</dbReference>
<dbReference type="GO" id="GO:0097228">
    <property type="term" value="C:sperm principal piece"/>
    <property type="evidence" value="ECO:0000318"/>
    <property type="project" value="GO_Central"/>
</dbReference>
<dbReference type="GO" id="GO:0005516">
    <property type="term" value="F:calmodulin binding"/>
    <property type="evidence" value="ECO:0000318"/>
    <property type="project" value="GO_Central"/>
</dbReference>
<dbReference type="GO" id="GO:0007339">
    <property type="term" value="P:binding of sperm to zona pellucida"/>
    <property type="evidence" value="ECO:0007669"/>
    <property type="project" value="InterPro"/>
</dbReference>
<dbReference type="CDD" id="cd12100">
    <property type="entry name" value="DD_CABYR_SP17"/>
    <property type="match status" value="1"/>
</dbReference>
<dbReference type="CDD" id="cd23767">
    <property type="entry name" value="IQCD"/>
    <property type="match status" value="1"/>
</dbReference>
<dbReference type="FunFam" id="1.20.890.10:FF:000006">
    <property type="entry name" value="Sperm surface protein Sp17"/>
    <property type="match status" value="1"/>
</dbReference>
<dbReference type="Gene3D" id="1.20.5.190">
    <property type="match status" value="1"/>
</dbReference>
<dbReference type="Gene3D" id="1.20.890.10">
    <property type="entry name" value="cAMP-dependent protein kinase regulatory subunit, dimerization-anchoring domain"/>
    <property type="match status" value="1"/>
</dbReference>
<dbReference type="InterPro" id="IPR003117">
    <property type="entry name" value="cAMP_dep_PK_reg_su_I/II_a/b"/>
</dbReference>
<dbReference type="InterPro" id="IPR047579">
    <property type="entry name" value="DD_CABYR_SP17"/>
</dbReference>
<dbReference type="InterPro" id="IPR000048">
    <property type="entry name" value="IQ_motif_EF-hand-BS"/>
</dbReference>
<dbReference type="InterPro" id="IPR012105">
    <property type="entry name" value="Sp17"/>
</dbReference>
<dbReference type="PANTHER" id="PTHR10699:SF11">
    <property type="entry name" value="IGLOO, ISOFORM A"/>
    <property type="match status" value="1"/>
</dbReference>
<dbReference type="PANTHER" id="PTHR10699">
    <property type="entry name" value="NEUROMODULIN"/>
    <property type="match status" value="1"/>
</dbReference>
<dbReference type="Pfam" id="PF00612">
    <property type="entry name" value="IQ"/>
    <property type="match status" value="1"/>
</dbReference>
<dbReference type="Pfam" id="PF02197">
    <property type="entry name" value="RIIa"/>
    <property type="match status" value="1"/>
</dbReference>
<dbReference type="PIRSF" id="PIRSF016533">
    <property type="entry name" value="Sp17"/>
    <property type="match status" value="1"/>
</dbReference>
<dbReference type="SMART" id="SM00015">
    <property type="entry name" value="IQ"/>
    <property type="match status" value="1"/>
</dbReference>
<dbReference type="SMART" id="SM00394">
    <property type="entry name" value="RIIa"/>
    <property type="match status" value="1"/>
</dbReference>
<dbReference type="SUPFAM" id="SSF47391">
    <property type="entry name" value="Dimerization-anchoring domain of cAMP-dependent PK regulatory subunit"/>
    <property type="match status" value="1"/>
</dbReference>
<dbReference type="PROSITE" id="PS50096">
    <property type="entry name" value="IQ"/>
    <property type="match status" value="1"/>
</dbReference>
<name>SP17_MONDO</name>
<feature type="chain" id="PRO_0000181343" description="Sperm surface protein Sp17">
    <location>
        <begin position="1"/>
        <end position="179"/>
    </location>
</feature>
<feature type="domain" description="IQ" evidence="2">
    <location>
        <begin position="143"/>
        <end position="172"/>
    </location>
</feature>
<feature type="region of interest" description="Disordered" evidence="3">
    <location>
        <begin position="72"/>
        <end position="138"/>
    </location>
</feature>
<feature type="region of interest" description="Disordered" evidence="3">
    <location>
        <begin position="159"/>
        <end position="179"/>
    </location>
</feature>
<feature type="compositionally biased region" description="Basic and acidic residues" evidence="3">
    <location>
        <begin position="72"/>
        <end position="109"/>
    </location>
</feature>
<feature type="compositionally biased region" description="Acidic residues" evidence="3">
    <location>
        <begin position="116"/>
        <end position="135"/>
    </location>
</feature>
<feature type="compositionally biased region" description="Basic and acidic residues" evidence="3">
    <location>
        <begin position="161"/>
        <end position="170"/>
    </location>
</feature>
<gene>
    <name type="primary">SPA17</name>
    <name type="synonym">SP17</name>
</gene>
<keyword id="KW-0472">Membrane</keyword>
<keyword id="KW-1185">Reference proteome</keyword>